<gene>
    <name evidence="1" type="primary">moaA2</name>
    <name type="ordered locus">Rv0869c</name>
    <name type="ORF">MTV043.62c</name>
</gene>
<proteinExistence type="evidence at protein level"/>
<reference key="1">
    <citation type="journal article" date="1998" name="Nature">
        <title>Deciphering the biology of Mycobacterium tuberculosis from the complete genome sequence.</title>
        <authorList>
            <person name="Cole S.T."/>
            <person name="Brosch R."/>
            <person name="Parkhill J."/>
            <person name="Garnier T."/>
            <person name="Churcher C.M."/>
            <person name="Harris D.E."/>
            <person name="Gordon S.V."/>
            <person name="Eiglmeier K."/>
            <person name="Gas S."/>
            <person name="Barry C.E. III"/>
            <person name="Tekaia F."/>
            <person name="Badcock K."/>
            <person name="Basham D."/>
            <person name="Brown D."/>
            <person name="Chillingworth T."/>
            <person name="Connor R."/>
            <person name="Davies R.M."/>
            <person name="Devlin K."/>
            <person name="Feltwell T."/>
            <person name="Gentles S."/>
            <person name="Hamlin N."/>
            <person name="Holroyd S."/>
            <person name="Hornsby T."/>
            <person name="Jagels K."/>
            <person name="Krogh A."/>
            <person name="McLean J."/>
            <person name="Moule S."/>
            <person name="Murphy L.D."/>
            <person name="Oliver S."/>
            <person name="Osborne J."/>
            <person name="Quail M.A."/>
            <person name="Rajandream M.A."/>
            <person name="Rogers J."/>
            <person name="Rutter S."/>
            <person name="Seeger K."/>
            <person name="Skelton S."/>
            <person name="Squares S."/>
            <person name="Squares R."/>
            <person name="Sulston J.E."/>
            <person name="Taylor K."/>
            <person name="Whitehead S."/>
            <person name="Barrell B.G."/>
        </authorList>
    </citation>
    <scope>NUCLEOTIDE SEQUENCE [LARGE SCALE GENOMIC DNA]</scope>
    <source>
        <strain>ATCC 25618 / H37Rv</strain>
    </source>
</reference>
<reference key="2">
    <citation type="journal article" date="2011" name="Mol. Cell. Proteomics">
        <title>Proteogenomic analysis of Mycobacterium tuberculosis by high resolution mass spectrometry.</title>
        <authorList>
            <person name="Kelkar D.S."/>
            <person name="Kumar D."/>
            <person name="Kumar P."/>
            <person name="Balakrishnan L."/>
            <person name="Muthusamy B."/>
            <person name="Yadav A.K."/>
            <person name="Shrivastava P."/>
            <person name="Marimuthu A."/>
            <person name="Anand S."/>
            <person name="Sundaram H."/>
            <person name="Kingsbury R."/>
            <person name="Harsha H.C."/>
            <person name="Nair B."/>
            <person name="Prasad T.S."/>
            <person name="Chauhan D.S."/>
            <person name="Katoch K."/>
            <person name="Katoch V.M."/>
            <person name="Kumar P."/>
            <person name="Chaerkady R."/>
            <person name="Ramachandran S."/>
            <person name="Dash D."/>
            <person name="Pandey A."/>
        </authorList>
    </citation>
    <scope>IDENTIFICATION BY MASS SPECTROMETRY [LARGE SCALE ANALYSIS]</scope>
    <source>
        <strain>ATCC 25618 / H37Rv</strain>
    </source>
</reference>
<comment type="function">
    <text evidence="1">Catalyzes the cyclization of GTP to (8S)-3',8-cyclo-7,8-dihydroguanosine 5'-triphosphate.</text>
</comment>
<comment type="catalytic activity">
    <reaction evidence="1">
        <text>GTP + AH2 + S-adenosyl-L-methionine = (8S)-3',8-cyclo-7,8-dihydroguanosine 5'-triphosphate + 5'-deoxyadenosine + L-methionine + A + H(+)</text>
        <dbReference type="Rhea" id="RHEA:49576"/>
        <dbReference type="ChEBI" id="CHEBI:13193"/>
        <dbReference type="ChEBI" id="CHEBI:15378"/>
        <dbReference type="ChEBI" id="CHEBI:17319"/>
        <dbReference type="ChEBI" id="CHEBI:17499"/>
        <dbReference type="ChEBI" id="CHEBI:37565"/>
        <dbReference type="ChEBI" id="CHEBI:57844"/>
        <dbReference type="ChEBI" id="CHEBI:59789"/>
        <dbReference type="ChEBI" id="CHEBI:131766"/>
        <dbReference type="EC" id="4.1.99.22"/>
    </reaction>
</comment>
<comment type="cofactor">
    <cofactor evidence="1">
        <name>[4Fe-4S] cluster</name>
        <dbReference type="ChEBI" id="CHEBI:49883"/>
    </cofactor>
    <text evidence="1">Binds 2 [4Fe-4S] clusters. Binds 1 [4Fe-4S] cluster coordinated with 3 cysteines and an exchangeable S-adenosyl-L-methionine and 1 [4Fe-4S] cluster coordinated with 3 cysteines and the GTP-derived substrate.</text>
</comment>
<comment type="pathway">
    <text evidence="1">Cofactor biosynthesis; molybdopterin biosynthesis.</text>
</comment>
<comment type="subunit">
    <text evidence="1">Monomer and homodimer.</text>
</comment>
<comment type="similarity">
    <text evidence="1">Belongs to the radical SAM superfamily. MoaA family.</text>
</comment>
<keyword id="KW-0004">4Fe-4S</keyword>
<keyword id="KW-0342">GTP-binding</keyword>
<keyword id="KW-0408">Iron</keyword>
<keyword id="KW-0411">Iron-sulfur</keyword>
<keyword id="KW-0456">Lyase</keyword>
<keyword id="KW-0479">Metal-binding</keyword>
<keyword id="KW-0501">Molybdenum cofactor biosynthesis</keyword>
<keyword id="KW-0547">Nucleotide-binding</keyword>
<keyword id="KW-1185">Reference proteome</keyword>
<keyword id="KW-0949">S-adenosyl-L-methionine</keyword>
<dbReference type="EC" id="4.1.99.22" evidence="1"/>
<dbReference type="EMBL" id="AL123456">
    <property type="protein sequence ID" value="CCP43617.1"/>
    <property type="molecule type" value="Genomic_DNA"/>
</dbReference>
<dbReference type="PIR" id="E70816">
    <property type="entry name" value="E70816"/>
</dbReference>
<dbReference type="RefSeq" id="NP_215384.1">
    <property type="nucleotide sequence ID" value="NC_000962.3"/>
</dbReference>
<dbReference type="SMR" id="P9WJS1"/>
<dbReference type="FunCoup" id="P9WJS1">
    <property type="interactions" value="179"/>
</dbReference>
<dbReference type="STRING" id="83332.Rv0869c"/>
<dbReference type="PaxDb" id="83332-Rv0869c"/>
<dbReference type="GeneID" id="885773"/>
<dbReference type="KEGG" id="mtu:Rv0869c"/>
<dbReference type="KEGG" id="mtv:RVBD_0869c"/>
<dbReference type="TubercuList" id="Rv0869c"/>
<dbReference type="eggNOG" id="COG2896">
    <property type="taxonomic scope" value="Bacteria"/>
</dbReference>
<dbReference type="InParanoid" id="P9WJS1"/>
<dbReference type="OrthoDB" id="9763993at2"/>
<dbReference type="PhylomeDB" id="P9WJS1"/>
<dbReference type="UniPathway" id="UPA00344"/>
<dbReference type="Proteomes" id="UP000001584">
    <property type="component" value="Chromosome"/>
</dbReference>
<dbReference type="GO" id="GO:0009274">
    <property type="term" value="C:peptidoglycan-based cell wall"/>
    <property type="evidence" value="ECO:0007005"/>
    <property type="project" value="MTBBASE"/>
</dbReference>
<dbReference type="GO" id="GO:0051539">
    <property type="term" value="F:4 iron, 4 sulfur cluster binding"/>
    <property type="evidence" value="ECO:0007669"/>
    <property type="project" value="UniProtKB-UniRule"/>
</dbReference>
<dbReference type="GO" id="GO:0061799">
    <property type="term" value="F:cyclic pyranopterin monophosphate synthase activity"/>
    <property type="evidence" value="ECO:0000318"/>
    <property type="project" value="GO_Central"/>
</dbReference>
<dbReference type="GO" id="GO:0061798">
    <property type="term" value="F:GTP 3',8'-cyclase activity"/>
    <property type="evidence" value="ECO:0000318"/>
    <property type="project" value="GO_Central"/>
</dbReference>
<dbReference type="GO" id="GO:0005525">
    <property type="term" value="F:GTP binding"/>
    <property type="evidence" value="ECO:0007669"/>
    <property type="project" value="UniProtKB-UniRule"/>
</dbReference>
<dbReference type="GO" id="GO:0046872">
    <property type="term" value="F:metal ion binding"/>
    <property type="evidence" value="ECO:0007669"/>
    <property type="project" value="UniProtKB-KW"/>
</dbReference>
<dbReference type="GO" id="GO:1904047">
    <property type="term" value="F:S-adenosyl-L-methionine binding"/>
    <property type="evidence" value="ECO:0007669"/>
    <property type="project" value="UniProtKB-UniRule"/>
</dbReference>
<dbReference type="GO" id="GO:0006777">
    <property type="term" value="P:Mo-molybdopterin cofactor biosynthetic process"/>
    <property type="evidence" value="ECO:0000318"/>
    <property type="project" value="GO_Central"/>
</dbReference>
<dbReference type="CDD" id="cd01335">
    <property type="entry name" value="Radical_SAM"/>
    <property type="match status" value="1"/>
</dbReference>
<dbReference type="CDD" id="cd21117">
    <property type="entry name" value="Twitch_MoaA"/>
    <property type="match status" value="1"/>
</dbReference>
<dbReference type="Gene3D" id="3.20.20.70">
    <property type="entry name" value="Aldolase class I"/>
    <property type="match status" value="1"/>
</dbReference>
<dbReference type="HAMAP" id="MF_01225_B">
    <property type="entry name" value="MoaA_B"/>
    <property type="match status" value="1"/>
</dbReference>
<dbReference type="InterPro" id="IPR013785">
    <property type="entry name" value="Aldolase_TIM"/>
</dbReference>
<dbReference type="InterPro" id="IPR006638">
    <property type="entry name" value="Elp3/MiaA/NifB-like_rSAM"/>
</dbReference>
<dbReference type="InterPro" id="IPR013483">
    <property type="entry name" value="MoaA"/>
</dbReference>
<dbReference type="InterPro" id="IPR000385">
    <property type="entry name" value="MoaA_NifB_PqqE_Fe-S-bd_CS"/>
</dbReference>
<dbReference type="InterPro" id="IPR010505">
    <property type="entry name" value="MoaA_twitch"/>
</dbReference>
<dbReference type="InterPro" id="IPR050105">
    <property type="entry name" value="MoCo_biosynth_MoaA/MoaC"/>
</dbReference>
<dbReference type="InterPro" id="IPR007197">
    <property type="entry name" value="rSAM"/>
</dbReference>
<dbReference type="NCBIfam" id="TIGR02666">
    <property type="entry name" value="moaA"/>
    <property type="match status" value="1"/>
</dbReference>
<dbReference type="PANTHER" id="PTHR22960:SF0">
    <property type="entry name" value="MOLYBDENUM COFACTOR BIOSYNTHESIS PROTEIN 1"/>
    <property type="match status" value="1"/>
</dbReference>
<dbReference type="PANTHER" id="PTHR22960">
    <property type="entry name" value="MOLYBDOPTERIN COFACTOR SYNTHESIS PROTEIN A"/>
    <property type="match status" value="1"/>
</dbReference>
<dbReference type="Pfam" id="PF06463">
    <property type="entry name" value="Mob_synth_C"/>
    <property type="match status" value="1"/>
</dbReference>
<dbReference type="Pfam" id="PF04055">
    <property type="entry name" value="Radical_SAM"/>
    <property type="match status" value="1"/>
</dbReference>
<dbReference type="SFLD" id="SFLDG01383">
    <property type="entry name" value="cyclic_pyranopterin_phosphate"/>
    <property type="match status" value="1"/>
</dbReference>
<dbReference type="SFLD" id="SFLDG01072">
    <property type="entry name" value="dehydrogenase_like"/>
    <property type="match status" value="1"/>
</dbReference>
<dbReference type="SMART" id="SM00729">
    <property type="entry name" value="Elp3"/>
    <property type="match status" value="1"/>
</dbReference>
<dbReference type="SUPFAM" id="SSF102114">
    <property type="entry name" value="Radical SAM enzymes"/>
    <property type="match status" value="1"/>
</dbReference>
<dbReference type="PROSITE" id="PS01305">
    <property type="entry name" value="MOAA_NIFB_PQQE"/>
    <property type="match status" value="1"/>
</dbReference>
<dbReference type="PROSITE" id="PS51918">
    <property type="entry name" value="RADICAL_SAM"/>
    <property type="match status" value="1"/>
</dbReference>
<feature type="chain" id="PRO_0000152977" description="GTP 3',8-cyclase 2">
    <location>
        <begin position="1"/>
        <end position="360"/>
    </location>
</feature>
<feature type="domain" description="Radical SAM core" evidence="2">
    <location>
        <begin position="33"/>
        <end position="259"/>
    </location>
</feature>
<feature type="binding site" evidence="1">
    <location>
        <position position="42"/>
    </location>
    <ligand>
        <name>GTP</name>
        <dbReference type="ChEBI" id="CHEBI:37565"/>
    </ligand>
</feature>
<feature type="binding site" evidence="1">
    <location>
        <position position="49"/>
    </location>
    <ligand>
        <name>[4Fe-4S] cluster</name>
        <dbReference type="ChEBI" id="CHEBI:49883"/>
        <label>1</label>
        <note>4Fe-4S-S-AdoMet</note>
    </ligand>
</feature>
<feature type="binding site" evidence="1">
    <location>
        <position position="53"/>
    </location>
    <ligand>
        <name>[4Fe-4S] cluster</name>
        <dbReference type="ChEBI" id="CHEBI:49883"/>
        <label>1</label>
        <note>4Fe-4S-S-AdoMet</note>
    </ligand>
</feature>
<feature type="binding site" evidence="1">
    <location>
        <position position="55"/>
    </location>
    <ligand>
        <name>S-adenosyl-L-methionine</name>
        <dbReference type="ChEBI" id="CHEBI:59789"/>
    </ligand>
</feature>
<feature type="binding site" evidence="1">
    <location>
        <position position="56"/>
    </location>
    <ligand>
        <name>[4Fe-4S] cluster</name>
        <dbReference type="ChEBI" id="CHEBI:49883"/>
        <label>1</label>
        <note>4Fe-4S-S-AdoMet</note>
    </ligand>
</feature>
<feature type="binding site" evidence="1">
    <location>
        <position position="93"/>
    </location>
    <ligand>
        <name>GTP</name>
        <dbReference type="ChEBI" id="CHEBI:37565"/>
    </ligand>
</feature>
<feature type="binding site" evidence="1">
    <location>
        <position position="97"/>
    </location>
    <ligand>
        <name>S-adenosyl-L-methionine</name>
        <dbReference type="ChEBI" id="CHEBI:59789"/>
    </ligand>
</feature>
<feature type="binding site" evidence="1">
    <location>
        <position position="124"/>
    </location>
    <ligand>
        <name>GTP</name>
        <dbReference type="ChEBI" id="CHEBI:37565"/>
    </ligand>
</feature>
<feature type="binding site" evidence="1">
    <location>
        <position position="148"/>
    </location>
    <ligand>
        <name>S-adenosyl-L-methionine</name>
        <dbReference type="ChEBI" id="CHEBI:59789"/>
    </ligand>
</feature>
<feature type="binding site" evidence="1">
    <location>
        <position position="185"/>
    </location>
    <ligand>
        <name>GTP</name>
        <dbReference type="ChEBI" id="CHEBI:37565"/>
    </ligand>
</feature>
<feature type="binding site" evidence="1">
    <location>
        <position position="219"/>
    </location>
    <ligand>
        <name>S-adenosyl-L-methionine</name>
        <dbReference type="ChEBI" id="CHEBI:59789"/>
    </ligand>
</feature>
<feature type="binding site" evidence="1">
    <location>
        <position position="287"/>
    </location>
    <ligand>
        <name>[4Fe-4S] cluster</name>
        <dbReference type="ChEBI" id="CHEBI:49883"/>
        <label>2</label>
        <note>4Fe-4S-substrate</note>
    </ligand>
</feature>
<feature type="binding site" evidence="1">
    <location>
        <position position="290"/>
    </location>
    <ligand>
        <name>[4Fe-4S] cluster</name>
        <dbReference type="ChEBI" id="CHEBI:49883"/>
        <label>2</label>
        <note>4Fe-4S-substrate</note>
    </ligand>
</feature>
<feature type="binding site" evidence="1">
    <location>
        <begin position="292"/>
        <end position="294"/>
    </location>
    <ligand>
        <name>GTP</name>
        <dbReference type="ChEBI" id="CHEBI:37565"/>
    </ligand>
</feature>
<feature type="binding site" evidence="1">
    <location>
        <position position="304"/>
    </location>
    <ligand>
        <name>[4Fe-4S] cluster</name>
        <dbReference type="ChEBI" id="CHEBI:49883"/>
        <label>2</label>
        <note>4Fe-4S-substrate</note>
    </ligand>
</feature>
<protein>
    <recommendedName>
        <fullName evidence="1">GTP 3',8-cyclase 2</fullName>
        <ecNumber evidence="1">4.1.99.22</ecNumber>
    </recommendedName>
    <alternativeName>
        <fullName evidence="1">Molybdenum cofactor biosynthesis protein A 2</fullName>
    </alternativeName>
</protein>
<evidence type="ECO:0000255" key="1">
    <source>
        <dbReference type="HAMAP-Rule" id="MF_01225"/>
    </source>
</evidence>
<evidence type="ECO:0000255" key="2">
    <source>
        <dbReference type="PROSITE-ProRule" id="PRU01266"/>
    </source>
</evidence>
<accession>P9WJS1</accession>
<accession>L0T7Y9</accession>
<accession>O53881</accession>
<accession>P65384</accession>
<name>MOAA2_MYCTU</name>
<sequence length="360" mass="38986">MTLTALGMPALRSRTNGIADPRVVPTTGPLVDTFGRVANDLRVSLTDRCNLRCSYCMPERGLRWLPGEQLLRPDELARLIHIAVTRLGVTSVRFTGGEPLLAHHLDEVVAATARLRPRPEISLTTNGVGLARRAGALAEAGLDRVNVSLDSIDRAHFAAITRRDRLAHVLAGLAAAKAAGLTPVKVNAVLDPTTGREDVVDLLRFCLERGYQLRVIEQMPLDAGHSWRRNIALSADDVLAALRPHFRLRPDPAPRGSAPAELWLVDAGPNTPRGRFGVIASVSHAFCSTCDRTRLTADGQIRSCLFSTEETDLRRLLRGGADDDAIEAAWRAAMWSKPAGHGINAPDFIQPDRPMSAIGG</sequence>
<organism>
    <name type="scientific">Mycobacterium tuberculosis (strain ATCC 25618 / H37Rv)</name>
    <dbReference type="NCBI Taxonomy" id="83332"/>
    <lineage>
        <taxon>Bacteria</taxon>
        <taxon>Bacillati</taxon>
        <taxon>Actinomycetota</taxon>
        <taxon>Actinomycetes</taxon>
        <taxon>Mycobacteriales</taxon>
        <taxon>Mycobacteriaceae</taxon>
        <taxon>Mycobacterium</taxon>
        <taxon>Mycobacterium tuberculosis complex</taxon>
    </lineage>
</organism>